<protein>
    <recommendedName>
        <fullName>Telomeric repeat-binding factor 2-interacting protein 1</fullName>
        <shortName>TERF2-interacting telomeric protein 1</shortName>
        <shortName>TRF2-interacting telomeric protein 1</shortName>
    </recommendedName>
    <alternativeName>
        <fullName>Dopamine receptor-interacting protein 5</fullName>
    </alternativeName>
    <alternativeName>
        <fullName>Repressor/activator protein 1 homolog</fullName>
        <shortName>RAP1 homolog</shortName>
        <shortName>hRap1</shortName>
    </alternativeName>
</protein>
<organism>
    <name type="scientific">Homo sapiens</name>
    <name type="common">Human</name>
    <dbReference type="NCBI Taxonomy" id="9606"/>
    <lineage>
        <taxon>Eukaryota</taxon>
        <taxon>Metazoa</taxon>
        <taxon>Chordata</taxon>
        <taxon>Craniata</taxon>
        <taxon>Vertebrata</taxon>
        <taxon>Euteleostomi</taxon>
        <taxon>Mammalia</taxon>
        <taxon>Eutheria</taxon>
        <taxon>Euarchontoglires</taxon>
        <taxon>Primates</taxon>
        <taxon>Haplorrhini</taxon>
        <taxon>Catarrhini</taxon>
        <taxon>Hominidae</taxon>
        <taxon>Homo</taxon>
    </lineage>
</organism>
<evidence type="ECO:0000250" key="1"/>
<evidence type="ECO:0000250" key="2">
    <source>
        <dbReference type="UniProtKB" id="Q91VL8"/>
    </source>
</evidence>
<evidence type="ECO:0000255" key="3"/>
<evidence type="ECO:0000256" key="4">
    <source>
        <dbReference type="SAM" id="MobiDB-lite"/>
    </source>
</evidence>
<evidence type="ECO:0000269" key="5">
    <source>
    </source>
</evidence>
<evidence type="ECO:0000269" key="6">
    <source>
    </source>
</evidence>
<evidence type="ECO:0000269" key="7">
    <source>
    </source>
</evidence>
<evidence type="ECO:0000269" key="8">
    <source>
    </source>
</evidence>
<evidence type="ECO:0000269" key="9">
    <source>
    </source>
</evidence>
<evidence type="ECO:0000305" key="10"/>
<evidence type="ECO:0000305" key="11">
    <source>
    </source>
</evidence>
<evidence type="ECO:0000305" key="12">
    <source>
    </source>
</evidence>
<evidence type="ECO:0007744" key="13">
    <source>
    </source>
</evidence>
<evidence type="ECO:0007744" key="14">
    <source>
    </source>
</evidence>
<evidence type="ECO:0007744" key="15">
    <source>
    </source>
</evidence>
<evidence type="ECO:0007744" key="16">
    <source>
    </source>
</evidence>
<evidence type="ECO:0007744" key="17">
    <source>
    </source>
</evidence>
<evidence type="ECO:0007744" key="18">
    <source>
    </source>
</evidence>
<evidence type="ECO:0007744" key="19">
    <source>
    </source>
</evidence>
<evidence type="ECO:0007744" key="20">
    <source>
    </source>
</evidence>
<evidence type="ECO:0007744" key="21">
    <source>
    </source>
</evidence>
<evidence type="ECO:0007744" key="22">
    <source>
    </source>
</evidence>
<evidence type="ECO:0007744" key="23">
    <source>
    </source>
</evidence>
<evidence type="ECO:0007829" key="24">
    <source>
        <dbReference type="PDB" id="1FEX"/>
    </source>
</evidence>
<evidence type="ECO:0007829" key="25">
    <source>
        <dbReference type="PDB" id="3K6G"/>
    </source>
</evidence>
<evidence type="ECO:0007829" key="26">
    <source>
        <dbReference type="PDB" id="4RQI"/>
    </source>
</evidence>
<evidence type="ECO:0007829" key="27">
    <source>
        <dbReference type="PDB" id="7OZ0"/>
    </source>
</evidence>
<reference key="1">
    <citation type="journal article" date="2000" name="Cell">
        <title>Identification of human RAP1: implications for telomere evolution.</title>
        <authorList>
            <person name="Li B."/>
            <person name="Oestreich S."/>
            <person name="de Lange T."/>
        </authorList>
    </citation>
    <scope>NUCLEOTIDE SEQUENCE [MRNA]</scope>
    <source>
        <tissue>Cervix carcinoma</tissue>
    </source>
</reference>
<reference key="2">
    <citation type="submission" date="2000-03" db="EMBL/GenBank/DDBJ databases">
        <title>Cloning and characterization of DRIP5, a new protein that specifically interacts with the D1 dopamine receptor.</title>
        <authorList>
            <person name="Lafuente M.J."/>
            <person name="Nasir J."/>
        </authorList>
    </citation>
    <scope>NUCLEOTIDE SEQUENCE [MRNA]</scope>
</reference>
<reference key="3">
    <citation type="journal article" date="2004" name="Proc. Natl. Acad. Sci. U.S.A.">
        <title>Large-scale cDNA transfection screening for genes related to cancer development and progression.</title>
        <authorList>
            <person name="Wan D."/>
            <person name="Gong Y."/>
            <person name="Qin W."/>
            <person name="Zhang P."/>
            <person name="Li J."/>
            <person name="Wei L."/>
            <person name="Zhou X."/>
            <person name="Li H."/>
            <person name="Qiu X."/>
            <person name="Zhong F."/>
            <person name="He L."/>
            <person name="Yu J."/>
            <person name="Yao G."/>
            <person name="Jiang H."/>
            <person name="Qian L."/>
            <person name="Yu Y."/>
            <person name="Shu H."/>
            <person name="Chen X."/>
            <person name="Xu H."/>
            <person name="Guo M."/>
            <person name="Pan Z."/>
            <person name="Chen Y."/>
            <person name="Ge C."/>
            <person name="Yang S."/>
            <person name="Gu J."/>
        </authorList>
    </citation>
    <scope>NUCLEOTIDE SEQUENCE [LARGE SCALE MRNA]</scope>
</reference>
<reference key="4">
    <citation type="journal article" date="2004" name="Nat. Genet.">
        <title>Complete sequencing and characterization of 21,243 full-length human cDNAs.</title>
        <authorList>
            <person name="Ota T."/>
            <person name="Suzuki Y."/>
            <person name="Nishikawa T."/>
            <person name="Otsuki T."/>
            <person name="Sugiyama T."/>
            <person name="Irie R."/>
            <person name="Wakamatsu A."/>
            <person name="Hayashi K."/>
            <person name="Sato H."/>
            <person name="Nagai K."/>
            <person name="Kimura K."/>
            <person name="Makita H."/>
            <person name="Sekine M."/>
            <person name="Obayashi M."/>
            <person name="Nishi T."/>
            <person name="Shibahara T."/>
            <person name="Tanaka T."/>
            <person name="Ishii S."/>
            <person name="Yamamoto J."/>
            <person name="Saito K."/>
            <person name="Kawai Y."/>
            <person name="Isono Y."/>
            <person name="Nakamura Y."/>
            <person name="Nagahari K."/>
            <person name="Murakami K."/>
            <person name="Yasuda T."/>
            <person name="Iwayanagi T."/>
            <person name="Wagatsuma M."/>
            <person name="Shiratori A."/>
            <person name="Sudo H."/>
            <person name="Hosoiri T."/>
            <person name="Kaku Y."/>
            <person name="Kodaira H."/>
            <person name="Kondo H."/>
            <person name="Sugawara M."/>
            <person name="Takahashi M."/>
            <person name="Kanda K."/>
            <person name="Yokoi T."/>
            <person name="Furuya T."/>
            <person name="Kikkawa E."/>
            <person name="Omura Y."/>
            <person name="Abe K."/>
            <person name="Kamihara K."/>
            <person name="Katsuta N."/>
            <person name="Sato K."/>
            <person name="Tanikawa M."/>
            <person name="Yamazaki M."/>
            <person name="Ninomiya K."/>
            <person name="Ishibashi T."/>
            <person name="Yamashita H."/>
            <person name="Murakawa K."/>
            <person name="Fujimori K."/>
            <person name="Tanai H."/>
            <person name="Kimata M."/>
            <person name="Watanabe M."/>
            <person name="Hiraoka S."/>
            <person name="Chiba Y."/>
            <person name="Ishida S."/>
            <person name="Ono Y."/>
            <person name="Takiguchi S."/>
            <person name="Watanabe S."/>
            <person name="Yosida M."/>
            <person name="Hotuta T."/>
            <person name="Kusano J."/>
            <person name="Kanehori K."/>
            <person name="Takahashi-Fujii A."/>
            <person name="Hara H."/>
            <person name="Tanase T.-O."/>
            <person name="Nomura Y."/>
            <person name="Togiya S."/>
            <person name="Komai F."/>
            <person name="Hara R."/>
            <person name="Takeuchi K."/>
            <person name="Arita M."/>
            <person name="Imose N."/>
            <person name="Musashino K."/>
            <person name="Yuuki H."/>
            <person name="Oshima A."/>
            <person name="Sasaki N."/>
            <person name="Aotsuka S."/>
            <person name="Yoshikawa Y."/>
            <person name="Matsunawa H."/>
            <person name="Ichihara T."/>
            <person name="Shiohata N."/>
            <person name="Sano S."/>
            <person name="Moriya S."/>
            <person name="Momiyama H."/>
            <person name="Satoh N."/>
            <person name="Takami S."/>
            <person name="Terashima Y."/>
            <person name="Suzuki O."/>
            <person name="Nakagawa S."/>
            <person name="Senoh A."/>
            <person name="Mizoguchi H."/>
            <person name="Goto Y."/>
            <person name="Shimizu F."/>
            <person name="Wakebe H."/>
            <person name="Hishigaki H."/>
            <person name="Watanabe T."/>
            <person name="Sugiyama A."/>
            <person name="Takemoto M."/>
            <person name="Kawakami B."/>
            <person name="Yamazaki M."/>
            <person name="Watanabe K."/>
            <person name="Kumagai A."/>
            <person name="Itakura S."/>
            <person name="Fukuzumi Y."/>
            <person name="Fujimori Y."/>
            <person name="Komiyama M."/>
            <person name="Tashiro H."/>
            <person name="Tanigami A."/>
            <person name="Fujiwara T."/>
            <person name="Ono T."/>
            <person name="Yamada K."/>
            <person name="Fujii Y."/>
            <person name="Ozaki K."/>
            <person name="Hirao M."/>
            <person name="Ohmori Y."/>
            <person name="Kawabata A."/>
            <person name="Hikiji T."/>
            <person name="Kobatake N."/>
            <person name="Inagaki H."/>
            <person name="Ikema Y."/>
            <person name="Okamoto S."/>
            <person name="Okitani R."/>
            <person name="Kawakami T."/>
            <person name="Noguchi S."/>
            <person name="Itoh T."/>
            <person name="Shigeta K."/>
            <person name="Senba T."/>
            <person name="Matsumura K."/>
            <person name="Nakajima Y."/>
            <person name="Mizuno T."/>
            <person name="Morinaga M."/>
            <person name="Sasaki M."/>
            <person name="Togashi T."/>
            <person name="Oyama M."/>
            <person name="Hata H."/>
            <person name="Watanabe M."/>
            <person name="Komatsu T."/>
            <person name="Mizushima-Sugano J."/>
            <person name="Satoh T."/>
            <person name="Shirai Y."/>
            <person name="Takahashi Y."/>
            <person name="Nakagawa K."/>
            <person name="Okumura K."/>
            <person name="Nagase T."/>
            <person name="Nomura N."/>
            <person name="Kikuchi H."/>
            <person name="Masuho Y."/>
            <person name="Yamashita R."/>
            <person name="Nakai K."/>
            <person name="Yada T."/>
            <person name="Nakamura Y."/>
            <person name="Ohara O."/>
            <person name="Isogai T."/>
            <person name="Sugano S."/>
        </authorList>
    </citation>
    <scope>NUCLEOTIDE SEQUENCE [LARGE SCALE MRNA]</scope>
    <source>
        <tissue>Ileal mucosa</tissue>
        <tissue>Teratocarcinoma</tissue>
    </source>
</reference>
<reference key="5">
    <citation type="journal article" date="2004" name="Nature">
        <title>The sequence and analysis of duplication-rich human chromosome 16.</title>
        <authorList>
            <person name="Martin J."/>
            <person name="Han C."/>
            <person name="Gordon L.A."/>
            <person name="Terry A."/>
            <person name="Prabhakar S."/>
            <person name="She X."/>
            <person name="Xie G."/>
            <person name="Hellsten U."/>
            <person name="Chan Y.M."/>
            <person name="Altherr M."/>
            <person name="Couronne O."/>
            <person name="Aerts A."/>
            <person name="Bajorek E."/>
            <person name="Black S."/>
            <person name="Blumer H."/>
            <person name="Branscomb E."/>
            <person name="Brown N.C."/>
            <person name="Bruno W.J."/>
            <person name="Buckingham J.M."/>
            <person name="Callen D.F."/>
            <person name="Campbell C.S."/>
            <person name="Campbell M.L."/>
            <person name="Campbell E.W."/>
            <person name="Caoile C."/>
            <person name="Challacombe J.F."/>
            <person name="Chasteen L.A."/>
            <person name="Chertkov O."/>
            <person name="Chi H.C."/>
            <person name="Christensen M."/>
            <person name="Clark L.M."/>
            <person name="Cohn J.D."/>
            <person name="Denys M."/>
            <person name="Detter J.C."/>
            <person name="Dickson M."/>
            <person name="Dimitrijevic-Bussod M."/>
            <person name="Escobar J."/>
            <person name="Fawcett J.J."/>
            <person name="Flowers D."/>
            <person name="Fotopulos D."/>
            <person name="Glavina T."/>
            <person name="Gomez M."/>
            <person name="Gonzales E."/>
            <person name="Goodstein D."/>
            <person name="Goodwin L.A."/>
            <person name="Grady D.L."/>
            <person name="Grigoriev I."/>
            <person name="Groza M."/>
            <person name="Hammon N."/>
            <person name="Hawkins T."/>
            <person name="Haydu L."/>
            <person name="Hildebrand C.E."/>
            <person name="Huang W."/>
            <person name="Israni S."/>
            <person name="Jett J."/>
            <person name="Jewett P.B."/>
            <person name="Kadner K."/>
            <person name="Kimball H."/>
            <person name="Kobayashi A."/>
            <person name="Krawczyk M.-C."/>
            <person name="Leyba T."/>
            <person name="Longmire J.L."/>
            <person name="Lopez F."/>
            <person name="Lou Y."/>
            <person name="Lowry S."/>
            <person name="Ludeman T."/>
            <person name="Manohar C.F."/>
            <person name="Mark G.A."/>
            <person name="McMurray K.L."/>
            <person name="Meincke L.J."/>
            <person name="Morgan J."/>
            <person name="Moyzis R.K."/>
            <person name="Mundt M.O."/>
            <person name="Munk A.C."/>
            <person name="Nandkeshwar R.D."/>
            <person name="Pitluck S."/>
            <person name="Pollard M."/>
            <person name="Predki P."/>
            <person name="Parson-Quintana B."/>
            <person name="Ramirez L."/>
            <person name="Rash S."/>
            <person name="Retterer J."/>
            <person name="Ricke D.O."/>
            <person name="Robinson D.L."/>
            <person name="Rodriguez A."/>
            <person name="Salamov A."/>
            <person name="Saunders E.H."/>
            <person name="Scott D."/>
            <person name="Shough T."/>
            <person name="Stallings R.L."/>
            <person name="Stalvey M."/>
            <person name="Sutherland R.D."/>
            <person name="Tapia R."/>
            <person name="Tesmer J.G."/>
            <person name="Thayer N."/>
            <person name="Thompson L.S."/>
            <person name="Tice H."/>
            <person name="Torney D.C."/>
            <person name="Tran-Gyamfi M."/>
            <person name="Tsai M."/>
            <person name="Ulanovsky L.E."/>
            <person name="Ustaszewska A."/>
            <person name="Vo N."/>
            <person name="White P.S."/>
            <person name="Williams A.L."/>
            <person name="Wills P.L."/>
            <person name="Wu J.-R."/>
            <person name="Wu K."/>
            <person name="Yang J."/>
            <person name="DeJong P."/>
            <person name="Bruce D."/>
            <person name="Doggett N.A."/>
            <person name="Deaven L."/>
            <person name="Schmutz J."/>
            <person name="Grimwood J."/>
            <person name="Richardson P."/>
            <person name="Rokhsar D.S."/>
            <person name="Eichler E.E."/>
            <person name="Gilna P."/>
            <person name="Lucas S.M."/>
            <person name="Myers R.M."/>
            <person name="Rubin E.M."/>
            <person name="Pennacchio L.A."/>
        </authorList>
    </citation>
    <scope>NUCLEOTIDE SEQUENCE [LARGE SCALE GENOMIC DNA]</scope>
</reference>
<reference key="6">
    <citation type="submission" date="2005-09" db="EMBL/GenBank/DDBJ databases">
        <authorList>
            <person name="Mural R.J."/>
            <person name="Istrail S."/>
            <person name="Sutton G.G."/>
            <person name="Florea L."/>
            <person name="Halpern A.L."/>
            <person name="Mobarry C.M."/>
            <person name="Lippert R."/>
            <person name="Walenz B."/>
            <person name="Shatkay H."/>
            <person name="Dew I."/>
            <person name="Miller J.R."/>
            <person name="Flanigan M.J."/>
            <person name="Edwards N.J."/>
            <person name="Bolanos R."/>
            <person name="Fasulo D."/>
            <person name="Halldorsson B.V."/>
            <person name="Hannenhalli S."/>
            <person name="Turner R."/>
            <person name="Yooseph S."/>
            <person name="Lu F."/>
            <person name="Nusskern D.R."/>
            <person name="Shue B.C."/>
            <person name="Zheng X.H."/>
            <person name="Zhong F."/>
            <person name="Delcher A.L."/>
            <person name="Huson D.H."/>
            <person name="Kravitz S.A."/>
            <person name="Mouchard L."/>
            <person name="Reinert K."/>
            <person name="Remington K.A."/>
            <person name="Clark A.G."/>
            <person name="Waterman M.S."/>
            <person name="Eichler E.E."/>
            <person name="Adams M.D."/>
            <person name="Hunkapiller M.W."/>
            <person name="Myers E.W."/>
            <person name="Venter J.C."/>
        </authorList>
    </citation>
    <scope>NUCLEOTIDE SEQUENCE [LARGE SCALE GENOMIC DNA]</scope>
</reference>
<reference key="7">
    <citation type="journal article" date="2004" name="Genome Res.">
        <title>The status, quality, and expansion of the NIH full-length cDNA project: the Mammalian Gene Collection (MGC).</title>
        <authorList>
            <consortium name="The MGC Project Team"/>
        </authorList>
    </citation>
    <scope>NUCLEOTIDE SEQUENCE [LARGE SCALE MRNA]</scope>
    <source>
        <tissue>Colon</tissue>
        <tissue>Lung</tissue>
        <tissue>Skin</tissue>
    </source>
</reference>
<reference key="8">
    <citation type="journal article" date="2003" name="Gene">
        <title>The telomeric protein Rap1 is conserved in vertebrates and is expressed from a bidirectional promoter positioned between the Rap1 and KARS genes.</title>
        <authorList>
            <person name="Tan M."/>
            <person name="Wei C."/>
            <person name="Price C.M."/>
        </authorList>
    </citation>
    <scope>BIDIRECTIONAL PROMOTER WITH KARS1</scope>
</reference>
<reference key="9">
    <citation type="journal article" date="2004" name="J. Biol. Chem.">
        <title>TIN2 binds TRF1 and TRF2 simultaneously and stabilizes the TRF2 complex on telomeres.</title>
        <authorList>
            <person name="Ye J.Z.-S."/>
            <person name="Donigian J.R."/>
            <person name="van Overbeek M."/>
            <person name="Loayza D."/>
            <person name="Luo Y."/>
            <person name="Krutchinsky A.N."/>
            <person name="Chait B.T."/>
            <person name="de Lange T."/>
        </authorList>
    </citation>
    <scope>IDENTIFICATION IN THE SHELTERIN COMPLEX</scope>
</reference>
<reference key="10">
    <citation type="journal article" date="2004" name="J. Biol. Chem.">
        <title>Telosome, a mammalian telomere-associated complex formed by multiple telomeric proteins.</title>
        <authorList>
            <person name="Liu D."/>
            <person name="O'Connor M.S."/>
            <person name="Qin J."/>
            <person name="Songyang Z."/>
        </authorList>
    </citation>
    <scope>IDENTIFICATION IN THE SHELTERIN COMPLEX</scope>
</reference>
<reference key="11">
    <citation type="journal article" date="2005" name="Genes Dev.">
        <title>Shelterin: the protein complex that shapes and safeguards human telomeres.</title>
        <authorList>
            <person name="de Lange T."/>
        </authorList>
    </citation>
    <scope>FUNCTION OF THE SHELTERIN COMPLEX</scope>
</reference>
<reference key="12">
    <citation type="journal article" date="2006" name="Nat. Biotechnol.">
        <title>A probability-based approach for high-throughput protein phosphorylation analysis and site localization.</title>
        <authorList>
            <person name="Beausoleil S.A."/>
            <person name="Villen J."/>
            <person name="Gerber S.A."/>
            <person name="Rush J."/>
            <person name="Gygi S.P."/>
        </authorList>
    </citation>
    <scope>PHOSPHORYLATION [LARGE SCALE ANALYSIS] AT SER-156 AND SER-203</scope>
    <scope>IDENTIFICATION BY MASS SPECTROMETRY [LARGE SCALE ANALYSIS]</scope>
    <source>
        <tissue>Cervix carcinoma</tissue>
    </source>
</reference>
<reference key="13">
    <citation type="journal article" date="2007" name="Science">
        <title>ATM and ATR substrate analysis reveals extensive protein networks responsive to DNA damage.</title>
        <authorList>
            <person name="Matsuoka S."/>
            <person name="Ballif B.A."/>
            <person name="Smogorzewska A."/>
            <person name="McDonald E.R. III"/>
            <person name="Hurov K.E."/>
            <person name="Luo J."/>
            <person name="Bakalarski C.E."/>
            <person name="Zhao Z."/>
            <person name="Solimini N."/>
            <person name="Lerenthal Y."/>
            <person name="Shiloh Y."/>
            <person name="Gygi S.P."/>
            <person name="Elledge S.J."/>
        </authorList>
    </citation>
    <scope>IDENTIFICATION BY MASS SPECTROMETRY [LARGE SCALE ANALYSIS]</scope>
    <source>
        <tissue>Embryonic kidney</tissue>
    </source>
</reference>
<reference key="14">
    <citation type="journal article" date="2008" name="Proc. Natl. Acad. Sci. U.S.A.">
        <title>A quantitative atlas of mitotic phosphorylation.</title>
        <authorList>
            <person name="Dephoure N."/>
            <person name="Zhou C."/>
            <person name="Villen J."/>
            <person name="Beausoleil S.A."/>
            <person name="Bakalarski C.E."/>
            <person name="Elledge S.J."/>
            <person name="Gygi S.P."/>
        </authorList>
    </citation>
    <scope>PHOSPHORYLATION [LARGE SCALE ANALYSIS] AT SER-36; SER-154 AND SER-203</scope>
    <scope>IDENTIFICATION BY MASS SPECTROMETRY [LARGE SCALE ANALYSIS]</scope>
    <source>
        <tissue>Cervix carcinoma</tissue>
    </source>
</reference>
<reference key="15">
    <citation type="journal article" date="2009" name="Anal. Chem.">
        <title>Lys-N and trypsin cover complementary parts of the phosphoproteome in a refined SCX-based approach.</title>
        <authorList>
            <person name="Gauci S."/>
            <person name="Helbig A.O."/>
            <person name="Slijper M."/>
            <person name="Krijgsveld J."/>
            <person name="Heck A.J."/>
            <person name="Mohammed S."/>
        </authorList>
    </citation>
    <scope>ACETYLATION [LARGE SCALE ANALYSIS] AT ALA-2</scope>
    <scope>CLEAVAGE OF INITIATOR METHIONINE [LARGE SCALE ANALYSIS]</scope>
    <scope>IDENTIFICATION BY MASS SPECTROMETRY [LARGE SCALE ANALYSIS]</scope>
</reference>
<reference key="16">
    <citation type="journal article" date="2009" name="Cell">
        <title>Mammalian BTBD12/SLX4 assembles a Holliday junction resolvase and is required for DNA repair.</title>
        <authorList>
            <person name="Svendsen J.M."/>
            <person name="Smogorzewska A."/>
            <person name="Sowa M.E."/>
            <person name="O'Connell B.C."/>
            <person name="Gygi S.P."/>
            <person name="Elledge S.J."/>
            <person name="Harper J.W."/>
        </authorList>
    </citation>
    <scope>INTERACTION WITH SLX4</scope>
</reference>
<reference key="17">
    <citation type="journal article" date="2009" name="EMBO J.">
        <title>Human RAP1 inhibits non-homologous end joining at telomeres.</title>
        <authorList>
            <person name="Sarthy J."/>
            <person name="Bae N.S."/>
            <person name="Scrafford J."/>
            <person name="Baumann P."/>
        </authorList>
    </citation>
    <scope>FUNCTION</scope>
</reference>
<reference key="18">
    <citation type="journal article" date="2009" name="Sci. Signal.">
        <title>Quantitative phosphoproteomic analysis of T cell receptor signaling reveals system-wide modulation of protein-protein interactions.</title>
        <authorList>
            <person name="Mayya V."/>
            <person name="Lundgren D.H."/>
            <person name="Hwang S.-I."/>
            <person name="Rezaul K."/>
            <person name="Wu L."/>
            <person name="Eng J.K."/>
            <person name="Rodionov V."/>
            <person name="Han D.K."/>
        </authorList>
    </citation>
    <scope>PHOSPHORYLATION [LARGE SCALE ANALYSIS] AT SER-154 AND SER-203</scope>
    <scope>IDENTIFICATION BY MASS SPECTROMETRY [LARGE SCALE ANALYSIS]</scope>
    <source>
        <tissue>Leukemic T-cell</tissue>
    </source>
</reference>
<reference key="19">
    <citation type="journal article" date="2010" name="Sci. Signal.">
        <title>Quantitative phosphoproteomics reveals widespread full phosphorylation site occupancy during mitosis.</title>
        <authorList>
            <person name="Olsen J.V."/>
            <person name="Vermeulen M."/>
            <person name="Santamaria A."/>
            <person name="Kumar C."/>
            <person name="Miller M.L."/>
            <person name="Jensen L.J."/>
            <person name="Gnad F."/>
            <person name="Cox J."/>
            <person name="Jensen T.S."/>
            <person name="Nigg E.A."/>
            <person name="Brunak S."/>
            <person name="Mann M."/>
        </authorList>
    </citation>
    <scope>PHOSPHORYLATION [LARGE SCALE ANALYSIS] AT SER-36; SER-154 AND SER-203</scope>
    <scope>IDENTIFICATION BY MASS SPECTROMETRY [LARGE SCALE ANALYSIS]</scope>
    <source>
        <tissue>Cervix carcinoma</tissue>
    </source>
</reference>
<reference key="20">
    <citation type="journal article" date="2011" name="BMC Syst. Biol.">
        <title>Initial characterization of the human central proteome.</title>
        <authorList>
            <person name="Burkard T.R."/>
            <person name="Planyavsky M."/>
            <person name="Kaupe I."/>
            <person name="Breitwieser F.P."/>
            <person name="Buerckstuemmer T."/>
            <person name="Bennett K.L."/>
            <person name="Superti-Furga G."/>
            <person name="Colinge J."/>
        </authorList>
    </citation>
    <scope>IDENTIFICATION BY MASS SPECTROMETRY [LARGE SCALE ANALYSIS]</scope>
</reference>
<reference key="21">
    <citation type="journal article" date="2011" name="Sci. Signal.">
        <title>System-wide temporal characterization of the proteome and phosphoproteome of human embryonic stem cell differentiation.</title>
        <authorList>
            <person name="Rigbolt K.T."/>
            <person name="Prokhorova T.A."/>
            <person name="Akimov V."/>
            <person name="Henningsen J."/>
            <person name="Johansen P.T."/>
            <person name="Kratchmarova I."/>
            <person name="Kassem M."/>
            <person name="Mann M."/>
            <person name="Olsen J.V."/>
            <person name="Blagoev B."/>
        </authorList>
    </citation>
    <scope>PHOSPHORYLATION [LARGE SCALE ANALYSIS] AT SER-203</scope>
    <scope>IDENTIFICATION BY MASS SPECTROMETRY [LARGE SCALE ANALYSIS]</scope>
</reference>
<reference key="22">
    <citation type="journal article" date="2013" name="J. Proteome Res.">
        <title>Toward a comprehensive characterization of a human cancer cell phosphoproteome.</title>
        <authorList>
            <person name="Zhou H."/>
            <person name="Di Palma S."/>
            <person name="Preisinger C."/>
            <person name="Peng M."/>
            <person name="Polat A.N."/>
            <person name="Heck A.J."/>
            <person name="Mohammed S."/>
        </authorList>
    </citation>
    <scope>PHOSPHORYLATION [LARGE SCALE ANALYSIS] AT SER-36; SER-43; SER-154; SER-203 AND SER-206</scope>
    <scope>IDENTIFICATION BY MASS SPECTROMETRY [LARGE SCALE ANALYSIS]</scope>
    <source>
        <tissue>Cervix carcinoma</tissue>
        <tissue>Erythroleukemia</tissue>
    </source>
</reference>
<reference key="23">
    <citation type="journal article" date="2014" name="J. Proteomics">
        <title>An enzyme assisted RP-RPLC approach for in-depth analysis of human liver phosphoproteome.</title>
        <authorList>
            <person name="Bian Y."/>
            <person name="Song C."/>
            <person name="Cheng K."/>
            <person name="Dong M."/>
            <person name="Wang F."/>
            <person name="Huang J."/>
            <person name="Sun D."/>
            <person name="Wang L."/>
            <person name="Ye M."/>
            <person name="Zou H."/>
        </authorList>
    </citation>
    <scope>PHOSPHORYLATION [LARGE SCALE ANALYSIS] AT SER-203</scope>
    <scope>IDENTIFICATION BY MASS SPECTROMETRY [LARGE SCALE ANALYSIS]</scope>
    <source>
        <tissue>Liver</tissue>
    </source>
</reference>
<reference key="24">
    <citation type="journal article" date="2014" name="Nat. Struct. Mol. Biol.">
        <title>Uncovering global SUMOylation signaling networks in a site-specific manner.</title>
        <authorList>
            <person name="Hendriks I.A."/>
            <person name="D'Souza R.C."/>
            <person name="Yang B."/>
            <person name="Verlaan-de Vries M."/>
            <person name="Mann M."/>
            <person name="Vertegaal A.C."/>
        </authorList>
    </citation>
    <scope>SUMOYLATION [LARGE SCALE ANALYSIS] AT LYS-240</scope>
    <scope>IDENTIFICATION BY MASS SPECTROMETRY [LARGE SCALE ANALYSIS]</scope>
</reference>
<reference key="25">
    <citation type="journal article" date="2015" name="Mol. Cell. Proteomics">
        <title>System-wide analysis of SUMOylation dynamics in response to replication stress reveals novel small ubiquitin-like modified target proteins and acceptor lysines relevant for genome stability.</title>
        <authorList>
            <person name="Xiao Z."/>
            <person name="Chang J.G."/>
            <person name="Hendriks I.A."/>
            <person name="Sigurdsson J.O."/>
            <person name="Olsen J.V."/>
            <person name="Vertegaal A.C."/>
        </authorList>
    </citation>
    <scope>SUMOYLATION [LARGE SCALE ANALYSIS] AT LYS-114; LYS-212 AND LYS-240</scope>
    <scope>IDENTIFICATION BY MASS SPECTROMETRY [LARGE SCALE ANALYSIS]</scope>
</reference>
<reference key="26">
    <citation type="journal article" date="2017" name="Nat. Struct. Mol. Biol.">
        <title>Site-specific mapping of the human SUMO proteome reveals co-modification with phosphorylation.</title>
        <authorList>
            <person name="Hendriks I.A."/>
            <person name="Lyon D."/>
            <person name="Young C."/>
            <person name="Jensen L.J."/>
            <person name="Vertegaal A.C."/>
            <person name="Nielsen M.L."/>
        </authorList>
    </citation>
    <scope>SUMOYLATION [LARGE SCALE ANALYSIS] AT LYS-114; LYS-194; LYS-208; LYS-212; LYS-240 AND LYS-372</scope>
    <scope>IDENTIFICATION BY MASS SPECTROMETRY [LARGE SCALE ANALYSIS]</scope>
</reference>
<reference key="27">
    <citation type="journal article" date="2001" name="J. Mol. Biol.">
        <title>NMR structure of the hRap1 Myb motif reveals a canonical three-helix bundle lacking the positive surface charge typical of Myb DNA-binding domains.</title>
        <authorList>
            <person name="Hanaoka S."/>
            <person name="Nagadoi A."/>
            <person name="Yoshimura S."/>
            <person name="Aimoto S."/>
            <person name="Li B."/>
            <person name="de Lange T."/>
            <person name="Nishimura Y."/>
        </authorList>
    </citation>
    <scope>STRUCTURE BY NMR OF 132-190</scope>
</reference>
<feature type="initiator methionine" description="Removed" evidence="15">
    <location>
        <position position="1"/>
    </location>
</feature>
<feature type="chain" id="PRO_0000197126" description="Telomeric repeat-binding factor 2-interacting protein 1">
    <location>
        <begin position="2"/>
        <end position="399"/>
    </location>
</feature>
<feature type="domain" description="BRCT">
    <location>
        <begin position="78"/>
        <end position="101"/>
    </location>
</feature>
<feature type="domain" description="Myb-like">
    <location>
        <begin position="128"/>
        <end position="188"/>
    </location>
</feature>
<feature type="region of interest" description="Disordered" evidence="4">
    <location>
        <begin position="104"/>
        <end position="132"/>
    </location>
</feature>
<feature type="region of interest" description="Disordered" evidence="4">
    <location>
        <begin position="196"/>
        <end position="244"/>
    </location>
</feature>
<feature type="region of interest" description="Disordered" evidence="4">
    <location>
        <begin position="264"/>
        <end position="311"/>
    </location>
</feature>
<feature type="short sequence motif" description="Nuclear localization signal" evidence="3">
    <location>
        <begin position="383"/>
        <end position="399"/>
    </location>
</feature>
<feature type="compositionally biased region" description="Low complexity" evidence="4">
    <location>
        <begin position="112"/>
        <end position="125"/>
    </location>
</feature>
<feature type="compositionally biased region" description="Acidic residues" evidence="4">
    <location>
        <begin position="280"/>
        <end position="304"/>
    </location>
</feature>
<feature type="modified residue" description="N-acetylalanine" evidence="15">
    <location>
        <position position="2"/>
    </location>
</feature>
<feature type="modified residue" description="Phosphoserine" evidence="14 17 19">
    <location>
        <position position="36"/>
    </location>
</feature>
<feature type="modified residue" description="Phosphoserine" evidence="19">
    <location>
        <position position="43"/>
    </location>
</feature>
<feature type="modified residue" description="Phosphoserine" evidence="14 16 17 19">
    <location>
        <position position="154"/>
    </location>
</feature>
<feature type="modified residue" description="Phosphoserine" evidence="13">
    <location>
        <position position="156"/>
    </location>
</feature>
<feature type="modified residue" description="Phosphoserine" evidence="13 14 16 17 18 19 20">
    <location>
        <position position="203"/>
    </location>
</feature>
<feature type="modified residue" description="Phosphoserine" evidence="19">
    <location>
        <position position="206"/>
    </location>
</feature>
<feature type="cross-link" description="Glycyl lysine isopeptide (Lys-Gly) (interchain with G-Cter in SUMO2)" evidence="22 23">
    <location>
        <position position="114"/>
    </location>
</feature>
<feature type="cross-link" description="Glycyl lysine isopeptide (Lys-Gly) (interchain with G-Cter in SUMO2)" evidence="23">
    <location>
        <position position="194"/>
    </location>
</feature>
<feature type="cross-link" description="Glycyl lysine isopeptide (Lys-Gly) (interchain with G-Cter in SUMO2)" evidence="23">
    <location>
        <position position="208"/>
    </location>
</feature>
<feature type="cross-link" description="Glycyl lysine isopeptide (Lys-Gly) (interchain with G-Cter in SUMO2)" evidence="22 23">
    <location>
        <position position="212"/>
    </location>
</feature>
<feature type="cross-link" description="Glycyl lysine isopeptide (Lys-Gly) (interchain with G-Cter in SUMO2)" evidence="21 22 23">
    <location>
        <position position="240"/>
    </location>
</feature>
<feature type="cross-link" description="Glycyl lysine isopeptide (Lys-Gly) (interchain with G-Cter in SUMO2)" evidence="23">
    <location>
        <position position="372"/>
    </location>
</feature>
<feature type="sequence variant" id="VAR_050195" description="In dbSNP:rs4888444.">
    <original>K</original>
    <variation>E</variation>
    <location>
        <position position="324"/>
    </location>
</feature>
<feature type="sequence conflict" description="In Ref. 4; BAA91317." evidence="10" ref="4">
    <original>Y</original>
    <variation>H</variation>
    <location>
        <position position="83"/>
    </location>
</feature>
<feature type="strand" evidence="27">
    <location>
        <begin position="20"/>
        <end position="22"/>
    </location>
</feature>
<feature type="strand" evidence="27">
    <location>
        <begin position="30"/>
        <end position="33"/>
    </location>
</feature>
<feature type="helix" evidence="27">
    <location>
        <begin position="39"/>
        <end position="48"/>
    </location>
</feature>
<feature type="strand" evidence="27">
    <location>
        <begin position="52"/>
        <end position="56"/>
    </location>
</feature>
<feature type="strand" evidence="27">
    <location>
        <begin position="62"/>
        <end position="65"/>
    </location>
</feature>
<feature type="strand" evidence="27">
    <location>
        <begin position="69"/>
        <end position="71"/>
    </location>
</feature>
<feature type="strand" evidence="27">
    <location>
        <begin position="75"/>
        <end position="77"/>
    </location>
</feature>
<feature type="helix" evidence="27">
    <location>
        <begin position="83"/>
        <end position="89"/>
    </location>
</feature>
<feature type="helix" evidence="26">
    <location>
        <begin position="93"/>
        <end position="97"/>
    </location>
</feature>
<feature type="helix" evidence="24">
    <location>
        <begin position="138"/>
        <end position="150"/>
    </location>
</feature>
<feature type="turn" evidence="24">
    <location>
        <begin position="155"/>
        <end position="159"/>
    </location>
</feature>
<feature type="helix" evidence="24">
    <location>
        <begin position="162"/>
        <end position="169"/>
    </location>
</feature>
<feature type="strand" evidence="24">
    <location>
        <begin position="172"/>
        <end position="174"/>
    </location>
</feature>
<feature type="helix" evidence="24">
    <location>
        <begin position="178"/>
        <end position="187"/>
    </location>
</feature>
<feature type="helix" evidence="25">
    <location>
        <begin position="308"/>
        <end position="324"/>
    </location>
</feature>
<feature type="helix" evidence="25">
    <location>
        <begin position="329"/>
        <end position="338"/>
    </location>
</feature>
<feature type="turn" evidence="25">
    <location>
        <begin position="339"/>
        <end position="341"/>
    </location>
</feature>
<feature type="helix" evidence="25">
    <location>
        <begin position="343"/>
        <end position="352"/>
    </location>
</feature>
<feature type="helix" evidence="25">
    <location>
        <begin position="364"/>
        <end position="370"/>
    </location>
</feature>
<feature type="helix" evidence="25">
    <location>
        <begin position="375"/>
        <end position="385"/>
    </location>
</feature>
<feature type="helix" evidence="25">
    <location>
        <begin position="387"/>
        <end position="397"/>
    </location>
</feature>
<keyword id="KW-0002">3D-structure</keyword>
<keyword id="KW-0007">Acetylation</keyword>
<keyword id="KW-0010">Activator</keyword>
<keyword id="KW-0158">Chromosome</keyword>
<keyword id="KW-0963">Cytoplasm</keyword>
<keyword id="KW-1017">Isopeptide bond</keyword>
<keyword id="KW-0539">Nucleus</keyword>
<keyword id="KW-0597">Phosphoprotein</keyword>
<keyword id="KW-1267">Proteomics identification</keyword>
<keyword id="KW-1185">Reference proteome</keyword>
<keyword id="KW-0779">Telomere</keyword>
<keyword id="KW-0804">Transcription</keyword>
<keyword id="KW-0805">Transcription regulation</keyword>
<keyword id="KW-0832">Ubl conjugation</keyword>
<name>TE2IP_HUMAN</name>
<gene>
    <name type="primary">TERF2IP</name>
    <name type="synonym">DRIP5</name>
    <name type="synonym">RAP1</name>
    <name type="ORF">PP8000</name>
</gene>
<comment type="function">
    <text evidence="7 9">Acts both as a regulator of telomere function and as a transcription regulator. Involved in the regulation of telomere length and protection as a component of the shelterin complex (telosome). In contrast to other components of the shelterin complex, it is dispensible for telomere capping and does not participate in the protection of telomeres against non-homologous end-joining (NHEJ)-mediated repair. Instead, it is required to negatively regulate telomere recombination and is essential for repressing homology-directed repair (HDR), which can affect telomere length. Does not bind DNA directly: recruited to telomeric double-stranded 5'-TTAGGG-3' repeats via its interaction with TERF2. Independently of its function in telomeres, also acts as a transcription regulator: recruited to extratelomeric 5'-TTAGGG-3' sites via its association with TERF2 or other factors, and regulates gene expression. When cytoplasmic, associates with the I-kappa-B-kinase (IKK) complex and acts as a regulator of the NF-kappa-B signaling by promoting IKK-mediated phosphorylation of RELA/p65, leading to activate expression of NF-kappa-B target genes.</text>
</comment>
<comment type="subunit">
    <text evidence="1 5 6 8">Associates with the I-kappa-B-kinase (IKK) core complex, composed of CHUK, IKBKB and IKBKG (By similarity). Homodimer. Component of the shelterin complex (telosome) composed of TERF1, TERF2, TINF2, TERF2IP ACD and POT1. Interacts with TERF2; the interaction is direct. Does not interact with TERF1. Interacts with SLX4/BTBD12.</text>
</comment>
<comment type="interaction">
    <interactant intactId="EBI-750109">
        <id>Q9NYB0</id>
    </interactant>
    <interactant intactId="EBI-745226">
        <id>Q13155</id>
        <label>AIMP2</label>
    </interactant>
    <organismsDiffer>false</organismsDiffer>
    <experiments>2</experiments>
</comment>
<comment type="interaction">
    <interactant intactId="EBI-750109">
        <id>Q9NYB0</id>
    </interactant>
    <interactant intactId="EBI-372388">
        <id>P14550</id>
        <label>AKR1A1</label>
    </interactant>
    <organismsDiffer>false</organismsDiffer>
    <experiments>2</experiments>
</comment>
<comment type="interaction">
    <interactant intactId="EBI-750109">
        <id>Q9NYB0</id>
    </interactant>
    <interactant intactId="EBI-1572139">
        <id>O60218</id>
        <label>AKR1B10</label>
    </interactant>
    <organismsDiffer>false</organismsDiffer>
    <experiments>2</experiments>
</comment>
<comment type="interaction">
    <interactant intactId="EBI-750109">
        <id>Q9NYB0</id>
    </interactant>
    <interactant intactId="EBI-748869">
        <id>O95154</id>
        <label>AKR7A3</label>
    </interactant>
    <organismsDiffer>false</organismsDiffer>
    <experiments>2</experiments>
</comment>
<comment type="interaction">
    <interactant intactId="EBI-750109">
        <id>Q9NYB0</id>
    </interactant>
    <interactant intactId="EBI-296087">
        <id>P31749</id>
        <label>AKT1</label>
    </interactant>
    <organismsDiffer>false</organismsDiffer>
    <experiments>2</experiments>
</comment>
<comment type="interaction">
    <interactant intactId="EBI-750109">
        <id>Q9NYB0</id>
    </interactant>
    <interactant intactId="EBI-745725">
        <id>Q9NWV8</id>
        <label>BABAM1</label>
    </interactant>
    <organismsDiffer>false</organismsDiffer>
    <experiments>2</experiments>
</comment>
<comment type="interaction">
    <interactant intactId="EBI-750109">
        <id>Q9NYB0</id>
    </interactant>
    <interactant intactId="EBI-2560588">
        <id>Q9BQE9</id>
        <label>BCL7B</label>
    </interactant>
    <organismsDiffer>false</organismsDiffer>
    <experiments>2</experiments>
</comment>
<comment type="interaction">
    <interactant intactId="EBI-750109">
        <id>Q9NYB0</id>
    </interactant>
    <interactant intactId="EBI-715898">
        <id>Q8IYL3</id>
        <label>C1orf174</label>
    </interactant>
    <organismsDiffer>false</organismsDiffer>
    <experiments>2</experiments>
</comment>
<comment type="interaction">
    <interactant intactId="EBI-750109">
        <id>Q9NYB0</id>
    </interactant>
    <interactant intactId="EBI-2557577">
        <id>Q9NZ63</id>
        <label>C9orf78</label>
    </interactant>
    <organismsDiffer>false</organismsDiffer>
    <experiments>2</experiments>
</comment>
<comment type="interaction">
    <interactant intactId="EBI-750109">
        <id>Q9NYB0</id>
    </interactant>
    <interactant intactId="EBI-747537">
        <id>P27482</id>
        <label>CALML3</label>
    </interactant>
    <organismsDiffer>false</organismsDiffer>
    <experiments>2</experiments>
</comment>
<comment type="interaction">
    <interactant intactId="EBI-750109">
        <id>Q9NYB0</id>
    </interactant>
    <interactant intactId="EBI-718324">
        <id>Q9UQN3</id>
        <label>CHMP2B</label>
    </interactant>
    <organismsDiffer>false</organismsDiffer>
    <experiments>2</experiments>
</comment>
<comment type="interaction">
    <interactant intactId="EBI-750109">
        <id>Q9NYB0</id>
    </interactant>
    <interactant intactId="EBI-79926">
        <id>Q14019</id>
        <label>COTL1</label>
    </interactant>
    <organismsDiffer>false</organismsDiffer>
    <experiments>2</experiments>
</comment>
<comment type="interaction">
    <interactant intactId="EBI-750109">
        <id>Q9NYB0</id>
    </interactant>
    <interactant intactId="EBI-7097057">
        <id>Q96FN4</id>
        <label>CPNE2</label>
    </interactant>
    <organismsDiffer>false</organismsDiffer>
    <experiments>2</experiments>
</comment>
<comment type="interaction">
    <interactant intactId="EBI-750109">
        <id>Q9NYB0</id>
    </interactant>
    <interactant intactId="EBI-886">
        <id>P46108</id>
        <label>CRK</label>
    </interactant>
    <organismsDiffer>false</organismsDiffer>
    <experiments>2</experiments>
</comment>
<comment type="interaction">
    <interactant intactId="EBI-750109">
        <id>Q9NYB0</id>
    </interactant>
    <interactant intactId="EBI-908846">
        <id>Q13363</id>
        <label>CTBP1</label>
    </interactant>
    <organismsDiffer>false</organismsDiffer>
    <experiments>2</experiments>
</comment>
<comment type="interaction">
    <interactant intactId="EBI-750109">
        <id>Q9NYB0</id>
    </interactant>
    <interactant intactId="EBI-1043041">
        <id>Q92620</id>
        <label>DHX38</label>
    </interactant>
    <organismsDiffer>false</organismsDiffer>
    <experiments>2</experiments>
</comment>
<comment type="interaction">
    <interactant intactId="EBI-750109">
        <id>Q9NYB0</id>
    </interactant>
    <interactant intactId="EBI-2834410">
        <id>Q8N8S7</id>
        <label>ENAH</label>
    </interactant>
    <organismsDiffer>false</organismsDiffer>
    <experiments>2</experiments>
</comment>
<comment type="interaction">
    <interactant intactId="EBI-750109">
        <id>Q9NYB0</id>
    </interactant>
    <interactant intactId="EBI-7487998">
        <id>Q8TE68</id>
        <label>EPS8L1</label>
    </interactant>
    <organismsDiffer>false</organismsDiffer>
    <experiments>2</experiments>
</comment>
<comment type="interaction">
    <interactant intactId="EBI-750109">
        <id>Q9NYB0</id>
    </interactant>
    <interactant intactId="EBI-3905109">
        <id>P12104</id>
        <label>FABP2</label>
    </interactant>
    <organismsDiffer>false</organismsDiffer>
    <experiments>2</experiments>
</comment>
<comment type="interaction">
    <interactant intactId="EBI-750109">
        <id>Q9NYB0</id>
    </interactant>
    <interactant intactId="EBI-745702">
        <id>Q13069</id>
        <label>GAGE5</label>
    </interactant>
    <organismsDiffer>false</organismsDiffer>
    <experiments>2</experiments>
</comment>
<comment type="interaction">
    <interactant intactId="EBI-750109">
        <id>Q9NYB0</id>
    </interactant>
    <interactant intactId="EBI-746309">
        <id>Q92917</id>
        <label>GPKOW</label>
    </interactant>
    <organismsDiffer>false</organismsDiffer>
    <experiments>2</experiments>
</comment>
<comment type="interaction">
    <interactant intactId="EBI-750109">
        <id>Q9NYB0</id>
    </interactant>
    <interactant intactId="EBI-3905342">
        <id>Q16775</id>
        <label>HAGH</label>
    </interactant>
    <organismsDiffer>false</organismsDiffer>
    <experiments>2</experiments>
</comment>
<comment type="interaction">
    <interactant intactId="EBI-750109">
        <id>Q9NYB0</id>
    </interactant>
    <interactant intactId="EBI-2214136">
        <id>O15347</id>
        <label>HMGB3</label>
    </interactant>
    <organismsDiffer>false</organismsDiffer>
    <experiments>2</experiments>
</comment>
<comment type="interaction">
    <interactant intactId="EBI-750109">
        <id>Q9NYB0</id>
    </interactant>
    <interactant intactId="EBI-2867693">
        <id>O00479</id>
        <label>HMGN4</label>
    </interactant>
    <organismsDiffer>false</organismsDiffer>
    <experiments>2</experiments>
</comment>
<comment type="interaction">
    <interactant intactId="EBI-750109">
        <id>Q9NYB0</id>
    </interactant>
    <interactant intactId="EBI-304185">
        <id>P61978</id>
        <label>HNRNPK</label>
    </interactant>
    <organismsDiffer>false</organismsDiffer>
    <experiments>2</experiments>
</comment>
<comment type="interaction">
    <interactant intactId="EBI-750109">
        <id>Q9NYB0</id>
    </interactant>
    <interactant intactId="EBI-1026330">
        <id>P18510</id>
        <label>IL1RN</label>
    </interactant>
    <organismsDiffer>false</organismsDiffer>
    <experiments>2</experiments>
</comment>
<comment type="interaction">
    <interactant intactId="EBI-750109">
        <id>Q9NYB0</id>
    </interactant>
    <interactant intactId="EBI-2510837">
        <id>Q9NS86</id>
        <label>LANCL2</label>
    </interactant>
    <organismsDiffer>false</organismsDiffer>
    <experiments>2</experiments>
</comment>
<comment type="interaction">
    <interactant intactId="EBI-750109">
        <id>Q9NYB0</id>
    </interactant>
    <interactant intactId="EBI-746778">
        <id>Q96A72</id>
        <label>MAGOHB</label>
    </interactant>
    <organismsDiffer>false</organismsDiffer>
    <experiments>2</experiments>
</comment>
<comment type="interaction">
    <interactant intactId="EBI-750109">
        <id>Q9NYB0</id>
    </interactant>
    <interactant intactId="EBI-374819">
        <id>P49736</id>
        <label>MCM2</label>
    </interactant>
    <organismsDiffer>false</organismsDiffer>
    <experiments>2</experiments>
</comment>
<comment type="interaction">
    <interactant intactId="EBI-750109">
        <id>Q9NYB0</id>
    </interactant>
    <interactant intactId="EBI-1046493">
        <id>Q9UKD2</id>
        <label>MRTO4</label>
    </interactant>
    <organismsDiffer>false</organismsDiffer>
    <experiments>2</experiments>
</comment>
<comment type="interaction">
    <interactant intactId="EBI-750109">
        <id>Q9NYB0</id>
    </interactant>
    <interactant intactId="EBI-11308402">
        <id>P80297</id>
        <label>MT1X</label>
    </interactant>
    <organismsDiffer>false</organismsDiffer>
    <experiments>2</experiments>
</comment>
<comment type="interaction">
    <interactant intactId="EBI-750109">
        <id>Q9NYB0</id>
    </interactant>
    <interactant intactId="EBI-8084264">
        <id>P25713</id>
        <label>MT3</label>
    </interactant>
    <organismsDiffer>false</organismsDiffer>
    <experiments>2</experiments>
</comment>
<comment type="interaction">
    <interactant intactId="EBI-750109">
        <id>Q9NYB0</id>
    </interactant>
    <interactant intactId="EBI-716205">
        <id>P49321</id>
        <label>NASP</label>
    </interactant>
    <organismsDiffer>false</organismsDiffer>
    <experiments>2</experiments>
</comment>
<comment type="interaction">
    <interactant intactId="EBI-750109">
        <id>Q9NYB0</id>
    </interactant>
    <interactant intactId="EBI-536866">
        <id>O95848</id>
        <label>NUDT14</label>
    </interactant>
    <organismsDiffer>false</organismsDiffer>
    <experiments>2</experiments>
</comment>
<comment type="interaction">
    <interactant intactId="EBI-750109">
        <id>Q9NYB0</id>
    </interactant>
    <interactant intactId="EBI-740486">
        <id>Q6ZVK8</id>
        <label>NUDT18</label>
    </interactant>
    <organismsDiffer>false</organismsDiffer>
    <experiments>2</experiments>
</comment>
<comment type="interaction">
    <interactant intactId="EBI-750109">
        <id>Q9NYB0</id>
    </interactant>
    <interactant intactId="EBI-521611">
        <id>Q14980</id>
        <label>NUMA1</label>
    </interactant>
    <organismsDiffer>false</organismsDiffer>
    <experiments>2</experiments>
</comment>
<comment type="interaction">
    <interactant intactId="EBI-750109">
        <id>Q9NYB0</id>
    </interactant>
    <interactant intactId="EBI-1044212">
        <id>Q9NZT2</id>
        <label>OGFR</label>
    </interactant>
    <organismsDiffer>false</organismsDiffer>
    <experiments>2</experiments>
</comment>
<comment type="interaction">
    <interactant intactId="EBI-750109">
        <id>Q9NYB0</id>
    </interactant>
    <interactant intactId="EBI-9355758">
        <id>Q96E09</id>
        <label>PABIR1</label>
    </interactant>
    <organismsDiffer>false</organismsDiffer>
    <experiments>2</experiments>
</comment>
<comment type="interaction">
    <interactant intactId="EBI-750109">
        <id>Q9NYB0</id>
    </interactant>
    <interactant intactId="EBI-10972020">
        <id>Q8WW12</id>
        <label>PCNP</label>
    </interactant>
    <organismsDiffer>false</organismsDiffer>
    <experiments>2</experiments>
</comment>
<comment type="interaction">
    <interactant intactId="EBI-750109">
        <id>Q9NYB0</id>
    </interactant>
    <interactant intactId="EBI-4287270">
        <id>P48539</id>
        <label>PCP4</label>
    </interactant>
    <organismsDiffer>false</organismsDiffer>
    <experiments>2</experiments>
</comment>
<comment type="interaction">
    <interactant intactId="EBI-750109">
        <id>Q9NYB0</id>
    </interactant>
    <interactant intactId="EBI-714410">
        <id>Q15121</id>
        <label>PEA15</label>
    </interactant>
    <organismsDiffer>false</organismsDiffer>
    <experiments>2</experiments>
</comment>
<comment type="interaction">
    <interactant intactId="EBI-750109">
        <id>Q9NYB0</id>
    </interactant>
    <interactant intactId="EBI-11307753">
        <id>O95336</id>
        <label>PGLS</label>
    </interactant>
    <organismsDiffer>false</organismsDiffer>
    <experiments>2</experiments>
</comment>
<comment type="interaction">
    <interactant intactId="EBI-750109">
        <id>Q9NYB0</id>
    </interactant>
    <interactant intactId="EBI-716569">
        <id>P28340</id>
        <label>POLD1</label>
    </interactant>
    <organismsDiffer>false</organismsDiffer>
    <experiments>2</experiments>
</comment>
<comment type="interaction">
    <interactant intactId="EBI-750109">
        <id>Q9NYB0</id>
    </interactant>
    <interactant intactId="EBI-355498">
        <id>Q5H9R7</id>
        <label>PPP6R3</label>
    </interactant>
    <organismsDiffer>false</organismsDiffer>
    <experiments>2</experiments>
</comment>
<comment type="interaction">
    <interactant intactId="EBI-750109">
        <id>Q9NYB0</id>
    </interactant>
    <interactant intactId="EBI-1753064">
        <id>Q9BXM0</id>
        <label>PRX</label>
    </interactant>
    <organismsDiffer>false</organismsDiffer>
    <experiments>2</experiments>
</comment>
<comment type="interaction">
    <interactant intactId="EBI-750109">
        <id>Q9NYB0</id>
    </interactant>
    <interactant intactId="EBI-2682091">
        <id>P06454</id>
        <label>PTMA</label>
    </interactant>
    <organismsDiffer>false</organismsDiffer>
    <experiments>2</experiments>
</comment>
<comment type="interaction">
    <interactant intactId="EBI-750109">
        <id>Q9NYB0</id>
    </interactant>
    <interactant intactId="EBI-713992">
        <id>P47224</id>
        <label>RABIF</label>
    </interactant>
    <organismsDiffer>false</organismsDiffer>
    <experiments>2</experiments>
</comment>
<comment type="interaction">
    <interactant intactId="EBI-750109">
        <id>Q9NYB0</id>
    </interactant>
    <interactant intactId="EBI-11310604">
        <id>O75884</id>
        <label>RBBP9</label>
    </interactant>
    <organismsDiffer>false</organismsDiffer>
    <experiments>2</experiments>
</comment>
<comment type="interaction">
    <interactant intactId="EBI-750109">
        <id>Q9NYB0</id>
    </interactant>
    <interactant intactId="EBI-722102">
        <id>Q96B86</id>
        <label>RGMA</label>
    </interactant>
    <organismsDiffer>false</organismsDiffer>
    <experiments>2</experiments>
</comment>
<comment type="interaction">
    <interactant intactId="EBI-750109">
        <id>Q9NYB0</id>
    </interactant>
    <interactant intactId="EBI-366570">
        <id>Q9BUL9</id>
        <label>RPP25</label>
    </interactant>
    <organismsDiffer>false</organismsDiffer>
    <experiments>2</experiments>
</comment>
<comment type="interaction">
    <interactant intactId="EBI-750109">
        <id>Q9NYB0</id>
    </interactant>
    <interactant intactId="EBI-743700">
        <id>P25815</id>
        <label>S100P</label>
    </interactant>
    <organismsDiffer>false</organismsDiffer>
    <experiments>2</experiments>
</comment>
<comment type="interaction">
    <interactant intactId="EBI-750109">
        <id>Q9NYB0</id>
    </interactant>
    <interactant intactId="EBI-2823066">
        <id>Q96I15</id>
        <label>SCLY</label>
    </interactant>
    <organismsDiffer>false</organismsDiffer>
    <experiments>2</experiments>
</comment>
<comment type="interaction">
    <interactant intactId="EBI-750109">
        <id>Q9NYB0</id>
    </interactant>
    <interactant intactId="EBI-2370740">
        <id>Q8IY92</id>
        <label>SLX4</label>
    </interactant>
    <organismsDiffer>false</organismsDiffer>
    <experiments>4</experiments>
</comment>
<comment type="interaction">
    <interactant intactId="EBI-750109">
        <id>Q9NYB0</id>
    </interactant>
    <interactant intactId="EBI-357418">
        <id>Q8TAQ2</id>
        <label>SMARCC2</label>
    </interactant>
    <organismsDiffer>false</organismsDiffer>
    <experiments>2</experiments>
</comment>
<comment type="interaction">
    <interactant intactId="EBI-750109">
        <id>Q9NYB0</id>
    </interactant>
    <interactant intactId="EBI-1056712">
        <id>P37837</id>
        <label>TALDO1</label>
    </interactant>
    <organismsDiffer>false</organismsDiffer>
    <experiments>2</experiments>
</comment>
<comment type="interaction">
    <interactant intactId="EBI-750109">
        <id>Q9NYB0</id>
    </interactant>
    <interactant intactId="EBI-2686341">
        <id>O75347</id>
        <label>TBCA</label>
    </interactant>
    <organismsDiffer>false</organismsDiffer>
    <experiments>2</experiments>
</comment>
<comment type="interaction">
    <interactant intactId="EBI-750109">
        <id>Q9NYB0</id>
    </interactant>
    <interactant intactId="EBI-706637">
        <id>Q15554</id>
        <label>TERF2</label>
    </interactant>
    <organismsDiffer>false</organismsDiffer>
    <experiments>37</experiments>
</comment>
<comment type="interaction">
    <interactant intactId="EBI-750109">
        <id>Q9NYB0</id>
    </interactant>
    <interactant intactId="EBI-717418">
        <id>Q9BSI4-3</id>
        <label>TINF2</label>
    </interactant>
    <organismsDiffer>false</organismsDiffer>
    <experiments>3</experiments>
</comment>
<comment type="interaction">
    <interactant intactId="EBI-750109">
        <id>Q9NYB0</id>
    </interactant>
    <interactant intactId="EBI-751196">
        <id>O14604</id>
        <label>TMSB4Y</label>
    </interactant>
    <organismsDiffer>false</organismsDiffer>
    <experiments>2</experiments>
</comment>
<comment type="interaction">
    <interactant intactId="EBI-750109">
        <id>Q9NYB0</id>
    </interactant>
    <interactant intactId="EBI-2559665">
        <id>Q5JTV8</id>
        <label>TOR1AIP1</label>
    </interactant>
    <organismsDiffer>false</organismsDiffer>
    <experiments>2</experiments>
</comment>
<comment type="interaction">
    <interactant intactId="EBI-750109">
        <id>Q9NYB0</id>
    </interactant>
    <interactant intactId="EBI-717229">
        <id>Q9Y5U2</id>
        <label>TSSC4</label>
    </interactant>
    <organismsDiffer>false</organismsDiffer>
    <experiments>2</experiments>
</comment>
<comment type="interaction">
    <interactant intactId="EBI-750109">
        <id>Q9NYB0</id>
    </interactant>
    <interactant intactId="EBI-722204">
        <id>Q6IBS0</id>
        <label>TWF2</label>
    </interactant>
    <organismsDiffer>false</organismsDiffer>
    <experiments>2</experiments>
</comment>
<comment type="interaction">
    <interactant intactId="EBI-750109">
        <id>Q9NYB0</id>
    </interactant>
    <interactant intactId="EBI-714860">
        <id>P09936</id>
        <label>UCHL1</label>
    </interactant>
    <organismsDiffer>false</organismsDiffer>
    <experiments>2</experiments>
</comment>
<comment type="interaction">
    <interactant intactId="EBI-750109">
        <id>Q9NYB0</id>
    </interactant>
    <interactant intactId="EBI-5278589">
        <id>Q14135</id>
        <label>VGLL4</label>
    </interactant>
    <organismsDiffer>false</organismsDiffer>
    <experiments>2</experiments>
</comment>
<comment type="interaction">
    <interactant intactId="EBI-750109">
        <id>Q9NYB0</id>
    </interactant>
    <interactant intactId="EBI-540834">
        <id>P61964</id>
        <label>WDR5</label>
    </interactant>
    <organismsDiffer>false</organismsDiffer>
    <experiments>2</experiments>
</comment>
<comment type="interaction">
    <interactant intactId="EBI-750109">
        <id>Q9NYB0</id>
    </interactant>
    <interactant intactId="EBI-750167">
        <id>Q96GT9</id>
        <label>XAGE2</label>
    </interactant>
    <organismsDiffer>false</organismsDiffer>
    <experiments>2</experiments>
</comment>
<comment type="interaction">
    <interactant intactId="EBI-750109">
        <id>Q9NYB0</id>
    </interactant>
    <interactant intactId="EBI-353208">
        <id>P12956</id>
        <label>XRCC6</label>
    </interactant>
    <organismsDiffer>false</organismsDiffer>
    <experiments>3</experiments>
</comment>
<comment type="interaction">
    <interactant intactId="EBI-750109">
        <id>Q9NYB0</id>
    </interactant>
    <interactant intactId="EBI-744257">
        <id>Q96IQ9</id>
        <label>ZNF414</label>
    </interactant>
    <organismsDiffer>false</organismsDiffer>
    <experiments>2</experiments>
</comment>
<comment type="subcellular location">
    <subcellularLocation>
        <location evidence="2">Nucleus</location>
    </subcellularLocation>
    <subcellularLocation>
        <location evidence="2">Cytoplasm</location>
    </subcellularLocation>
    <subcellularLocation>
        <location evidence="2">Chromosome</location>
    </subcellularLocation>
    <subcellularLocation>
        <location evidence="2">Chromosome</location>
        <location evidence="2">Telomere</location>
    </subcellularLocation>
    <text evidence="2">Associates with chromosomes, both at telomeres and in extratelomeric sites. Also exists as a cytoplasmic form, where it associates with the IKK complex.</text>
</comment>
<comment type="tissue specificity">
    <text>Ubiquitous. Highly expressed.</text>
</comment>
<comment type="miscellaneous">
    <text evidence="11">Shares a bidirectional promoter with KARS1.</text>
</comment>
<comment type="similarity">
    <text evidence="10">Belongs to the RAP1 family.</text>
</comment>
<comment type="caution">
    <text evidence="12">Was reported to participate in the protection of telomeres against non-homologous end-joining (NHEJ)-mediated repair in the absence of TERF2 (PubMed:19763083). However, this probably does not corresponds to its primary function and experiments in mouse showed that it is dispensible for such process and is required for repression of homology-directed repair (HDR).</text>
</comment>
<comment type="sequence caution" evidence="10">
    <conflict type="frameshift">
        <sequence resource="EMBL-CDS" id="AAL55783"/>
    </conflict>
</comment>
<comment type="sequence caution" evidence="10">
    <conflict type="erroneous termination">
        <sequence resource="EMBL-CDS" id="BAA91317"/>
    </conflict>
    <text>Truncated C-terminus.</text>
</comment>
<comment type="sequence caution" evidence="10">
    <conflict type="erroneous initiation">
        <sequence resource="EMBL-CDS" id="BAG60996"/>
    </conflict>
    <text>Truncated N-terminus.</text>
</comment>
<dbReference type="EMBL" id="AF262988">
    <property type="protein sequence ID" value="AAF72711.1"/>
    <property type="molecule type" value="mRNA"/>
</dbReference>
<dbReference type="EMBL" id="AF250393">
    <property type="protein sequence ID" value="AAQ14259.1"/>
    <property type="molecule type" value="mRNA"/>
</dbReference>
<dbReference type="EMBL" id="AF289599">
    <property type="protein sequence ID" value="AAL55783.1"/>
    <property type="status" value="ALT_FRAME"/>
    <property type="molecule type" value="mRNA"/>
</dbReference>
<dbReference type="EMBL" id="AK000669">
    <property type="protein sequence ID" value="BAA91317.1"/>
    <property type="status" value="ALT_SEQ"/>
    <property type="molecule type" value="mRNA"/>
</dbReference>
<dbReference type="EMBL" id="AK298880">
    <property type="protein sequence ID" value="BAG60996.1"/>
    <property type="status" value="ALT_INIT"/>
    <property type="molecule type" value="mRNA"/>
</dbReference>
<dbReference type="EMBL" id="AC025287">
    <property type="status" value="NOT_ANNOTATED_CDS"/>
    <property type="molecule type" value="Genomic_DNA"/>
</dbReference>
<dbReference type="EMBL" id="CH471114">
    <property type="protein sequence ID" value="EAW95616.1"/>
    <property type="molecule type" value="Genomic_DNA"/>
</dbReference>
<dbReference type="EMBL" id="CH471114">
    <property type="protein sequence ID" value="EAW95618.1"/>
    <property type="molecule type" value="Genomic_DNA"/>
</dbReference>
<dbReference type="EMBL" id="BC004465">
    <property type="protein sequence ID" value="AAH04465.1"/>
    <property type="molecule type" value="mRNA"/>
</dbReference>
<dbReference type="EMBL" id="BC005841">
    <property type="protein sequence ID" value="AAH05841.1"/>
    <property type="molecule type" value="mRNA"/>
</dbReference>
<dbReference type="EMBL" id="BC022428">
    <property type="protein sequence ID" value="AAH22428.1"/>
    <property type="molecule type" value="mRNA"/>
</dbReference>
<dbReference type="EMBL" id="BC078171">
    <property type="protein sequence ID" value="AAH78171.1"/>
    <property type="molecule type" value="mRNA"/>
</dbReference>
<dbReference type="CCDS" id="CCDS32491.1"/>
<dbReference type="RefSeq" id="NP_061848.2">
    <property type="nucleotide sequence ID" value="NM_018975.3"/>
</dbReference>
<dbReference type="PDB" id="1FEX">
    <property type="method" value="NMR"/>
    <property type="chains" value="A=132-190"/>
</dbReference>
<dbReference type="PDB" id="3K6G">
    <property type="method" value="X-ray"/>
    <property type="resolution" value="1.95 A"/>
    <property type="chains" value="A/B/C=303-399"/>
</dbReference>
<dbReference type="PDB" id="4RQI">
    <property type="method" value="X-ray"/>
    <property type="resolution" value="2.44 A"/>
    <property type="chains" value="E/F/G/H=89-106"/>
</dbReference>
<dbReference type="PDB" id="7OZ0">
    <property type="method" value="NMR"/>
    <property type="chains" value="A=1-114"/>
</dbReference>
<dbReference type="PDB" id="8RD4">
    <property type="method" value="EM"/>
    <property type="resolution" value="3.58 A"/>
    <property type="chains" value="D=1-399"/>
</dbReference>
<dbReference type="PDBsum" id="1FEX"/>
<dbReference type="PDBsum" id="3K6G"/>
<dbReference type="PDBsum" id="4RQI"/>
<dbReference type="PDBsum" id="7OZ0"/>
<dbReference type="PDBsum" id="8RD4"/>
<dbReference type="BMRB" id="Q9NYB0"/>
<dbReference type="EMDB" id="EMD-19065"/>
<dbReference type="SMR" id="Q9NYB0"/>
<dbReference type="BioGRID" id="119942">
    <property type="interactions" value="618"/>
</dbReference>
<dbReference type="ComplexPortal" id="CPX-152">
    <property type="entry name" value="Shelterin complex"/>
</dbReference>
<dbReference type="CORUM" id="Q9NYB0"/>
<dbReference type="DIP" id="DIP-34868N"/>
<dbReference type="FunCoup" id="Q9NYB0">
    <property type="interactions" value="2737"/>
</dbReference>
<dbReference type="IntAct" id="Q9NYB0">
    <property type="interactions" value="180"/>
</dbReference>
<dbReference type="MINT" id="Q9NYB0"/>
<dbReference type="STRING" id="9606.ENSP00000300086"/>
<dbReference type="BindingDB" id="Q9NYB0"/>
<dbReference type="ChEMBL" id="CHEMBL3751647"/>
<dbReference type="GlyCosmos" id="Q9NYB0">
    <property type="glycosylation" value="1 site, 1 glycan"/>
</dbReference>
<dbReference type="GlyGen" id="Q9NYB0">
    <property type="glycosylation" value="3 sites, 1 O-linked glycan (2 sites)"/>
</dbReference>
<dbReference type="iPTMnet" id="Q9NYB0"/>
<dbReference type="PhosphoSitePlus" id="Q9NYB0"/>
<dbReference type="BioMuta" id="TERF2IP"/>
<dbReference type="DMDM" id="21542267"/>
<dbReference type="jPOST" id="Q9NYB0"/>
<dbReference type="MassIVE" id="Q9NYB0"/>
<dbReference type="PaxDb" id="9606-ENSP00000300086"/>
<dbReference type="PeptideAtlas" id="Q9NYB0"/>
<dbReference type="ProteomicsDB" id="83206"/>
<dbReference type="Pumba" id="Q9NYB0"/>
<dbReference type="Antibodypedia" id="1877">
    <property type="antibodies" value="514 antibodies from 41 providers"/>
</dbReference>
<dbReference type="DNASU" id="54386"/>
<dbReference type="Ensembl" id="ENST00000300086.5">
    <property type="protein sequence ID" value="ENSP00000300086.4"/>
    <property type="gene ID" value="ENSG00000166848.7"/>
</dbReference>
<dbReference type="GeneID" id="54386"/>
<dbReference type="KEGG" id="hsa:54386"/>
<dbReference type="MANE-Select" id="ENST00000300086.5">
    <property type="protein sequence ID" value="ENSP00000300086.4"/>
    <property type="RefSeq nucleotide sequence ID" value="NM_018975.4"/>
    <property type="RefSeq protein sequence ID" value="NP_061848.2"/>
</dbReference>
<dbReference type="UCSC" id="uc002fet.3">
    <property type="organism name" value="human"/>
</dbReference>
<dbReference type="AGR" id="HGNC:19246"/>
<dbReference type="CTD" id="54386"/>
<dbReference type="DisGeNET" id="54386"/>
<dbReference type="GeneCards" id="TERF2IP"/>
<dbReference type="HGNC" id="HGNC:19246">
    <property type="gene designation" value="TERF2IP"/>
</dbReference>
<dbReference type="HPA" id="ENSG00000166848">
    <property type="expression patterns" value="Low tissue specificity"/>
</dbReference>
<dbReference type="MalaCards" id="TERF2IP"/>
<dbReference type="MIM" id="605061">
    <property type="type" value="gene"/>
</dbReference>
<dbReference type="neXtProt" id="NX_Q9NYB0"/>
<dbReference type="OpenTargets" id="ENSG00000166848"/>
<dbReference type="Orphanet" id="618">
    <property type="disease" value="Familial melanoma"/>
</dbReference>
<dbReference type="PharmGKB" id="PA134976325"/>
<dbReference type="VEuPathDB" id="HostDB:ENSG00000166848"/>
<dbReference type="eggNOG" id="ENOG502RPXS">
    <property type="taxonomic scope" value="Eukaryota"/>
</dbReference>
<dbReference type="GeneTree" id="ENSGT00390000005351"/>
<dbReference type="HOGENOM" id="CLU_028192_0_0_1"/>
<dbReference type="InParanoid" id="Q9NYB0"/>
<dbReference type="OMA" id="SDGYPIW"/>
<dbReference type="OrthoDB" id="435460at2759"/>
<dbReference type="PAN-GO" id="Q9NYB0">
    <property type="GO annotations" value="4 GO annotations based on evolutionary models"/>
</dbReference>
<dbReference type="PhylomeDB" id="Q9NYB0"/>
<dbReference type="TreeFam" id="TF332348"/>
<dbReference type="PathwayCommons" id="Q9NYB0"/>
<dbReference type="Reactome" id="R-HSA-110328">
    <property type="pathway name" value="Recognition and association of DNA glycosylase with site containing an affected pyrimidine"/>
</dbReference>
<dbReference type="Reactome" id="R-HSA-110329">
    <property type="pathway name" value="Cleavage of the damaged pyrimidine"/>
</dbReference>
<dbReference type="Reactome" id="R-HSA-110330">
    <property type="pathway name" value="Recognition and association of DNA glycosylase with site containing an affected purine"/>
</dbReference>
<dbReference type="Reactome" id="R-HSA-110331">
    <property type="pathway name" value="Cleavage of the damaged purine"/>
</dbReference>
<dbReference type="Reactome" id="R-HSA-1221632">
    <property type="pathway name" value="Meiotic synapsis"/>
</dbReference>
<dbReference type="Reactome" id="R-HSA-171306">
    <property type="pathway name" value="Packaging Of Telomere Ends"/>
</dbReference>
<dbReference type="Reactome" id="R-HSA-171319">
    <property type="pathway name" value="Telomere Extension By Telomerase"/>
</dbReference>
<dbReference type="Reactome" id="R-HSA-174411">
    <property type="pathway name" value="Polymerase switching on the C-strand of the telomere"/>
</dbReference>
<dbReference type="Reactome" id="R-HSA-174414">
    <property type="pathway name" value="Processive synthesis on the C-strand of the telomere"/>
</dbReference>
<dbReference type="Reactome" id="R-HSA-174417">
    <property type="pathway name" value="Telomere C-strand (Lagging Strand) Synthesis"/>
</dbReference>
<dbReference type="Reactome" id="R-HSA-174430">
    <property type="pathway name" value="Telomere C-strand synthesis initiation"/>
</dbReference>
<dbReference type="Reactome" id="R-HSA-174437">
    <property type="pathway name" value="Removal of the Flap Intermediate from the C-strand"/>
</dbReference>
<dbReference type="Reactome" id="R-HSA-2559586">
    <property type="pathway name" value="DNA Damage/Telomere Stress Induced Senescence"/>
</dbReference>
<dbReference type="Reactome" id="R-HSA-9670095">
    <property type="pathway name" value="Inhibition of DNA recombination at telomere"/>
</dbReference>
<dbReference type="SignaLink" id="Q9NYB0"/>
<dbReference type="SIGNOR" id="Q9NYB0"/>
<dbReference type="BioGRID-ORCS" id="54386">
    <property type="hits" value="23 hits in 1161 CRISPR screens"/>
</dbReference>
<dbReference type="ChiTaRS" id="TERF2IP">
    <property type="organism name" value="human"/>
</dbReference>
<dbReference type="EvolutionaryTrace" id="Q9NYB0"/>
<dbReference type="GeneWiki" id="TERF2IP"/>
<dbReference type="GenomeRNAi" id="54386"/>
<dbReference type="Pharos" id="Q9NYB0">
    <property type="development level" value="Tchem"/>
</dbReference>
<dbReference type="PRO" id="PR:Q9NYB0"/>
<dbReference type="Proteomes" id="UP000005640">
    <property type="component" value="Chromosome 16"/>
</dbReference>
<dbReference type="RNAct" id="Q9NYB0">
    <property type="molecule type" value="protein"/>
</dbReference>
<dbReference type="Bgee" id="ENSG00000166848">
    <property type="expression patterns" value="Expressed in middle temporal gyrus and 211 other cell types or tissues"/>
</dbReference>
<dbReference type="ExpressionAtlas" id="Q9NYB0">
    <property type="expression patterns" value="baseline and differential"/>
</dbReference>
<dbReference type="GO" id="GO:0000781">
    <property type="term" value="C:chromosome, telomeric region"/>
    <property type="evidence" value="ECO:0000314"/>
    <property type="project" value="BHF-UCL"/>
</dbReference>
<dbReference type="GO" id="GO:0005737">
    <property type="term" value="C:cytoplasm"/>
    <property type="evidence" value="ECO:0000314"/>
    <property type="project" value="CAFA"/>
</dbReference>
<dbReference type="GO" id="GO:0001673">
    <property type="term" value="C:male germ cell nucleus"/>
    <property type="evidence" value="ECO:0007669"/>
    <property type="project" value="Ensembl"/>
</dbReference>
<dbReference type="GO" id="GO:0016604">
    <property type="term" value="C:nuclear body"/>
    <property type="evidence" value="ECO:0000314"/>
    <property type="project" value="HPA"/>
</dbReference>
<dbReference type="GO" id="GO:0000228">
    <property type="term" value="C:nuclear chromosome"/>
    <property type="evidence" value="ECO:0000304"/>
    <property type="project" value="ProtInc"/>
</dbReference>
<dbReference type="GO" id="GO:0000783">
    <property type="term" value="C:nuclear telomere cap complex"/>
    <property type="evidence" value="ECO:0000314"/>
    <property type="project" value="BHF-UCL"/>
</dbReference>
<dbReference type="GO" id="GO:0005654">
    <property type="term" value="C:nucleoplasm"/>
    <property type="evidence" value="ECO:0000314"/>
    <property type="project" value="HPA"/>
</dbReference>
<dbReference type="GO" id="GO:0005634">
    <property type="term" value="C:nucleus"/>
    <property type="evidence" value="ECO:0000314"/>
    <property type="project" value="UniProtKB"/>
</dbReference>
<dbReference type="GO" id="GO:0070187">
    <property type="term" value="C:shelterin complex"/>
    <property type="evidence" value="ECO:0000314"/>
    <property type="project" value="BHF-UCL"/>
</dbReference>
<dbReference type="GO" id="GO:0098505">
    <property type="term" value="F:G-rich strand telomeric DNA binding"/>
    <property type="evidence" value="ECO:0000314"/>
    <property type="project" value="BHF-UCL"/>
</dbReference>
<dbReference type="GO" id="GO:0019902">
    <property type="term" value="F:phosphatase binding"/>
    <property type="evidence" value="ECO:0000353"/>
    <property type="project" value="CAFA"/>
</dbReference>
<dbReference type="GO" id="GO:0042162">
    <property type="term" value="F:telomeric DNA binding"/>
    <property type="evidence" value="ECO:0000314"/>
    <property type="project" value="BHF-UCL"/>
</dbReference>
<dbReference type="GO" id="GO:0035556">
    <property type="term" value="P:intracellular signal transduction"/>
    <property type="evidence" value="ECO:0000315"/>
    <property type="project" value="UniProtKB"/>
</dbReference>
<dbReference type="GO" id="GO:0048239">
    <property type="term" value="P:negative regulation of DNA recombination at telomere"/>
    <property type="evidence" value="ECO:0000250"/>
    <property type="project" value="UniProtKB"/>
</dbReference>
<dbReference type="GO" id="GO:0001933">
    <property type="term" value="P:negative regulation of protein phosphorylation"/>
    <property type="evidence" value="ECO:0000315"/>
    <property type="project" value="CAFA"/>
</dbReference>
<dbReference type="GO" id="GO:0032205">
    <property type="term" value="P:negative regulation of telomere maintenance"/>
    <property type="evidence" value="ECO:0000314"/>
    <property type="project" value="UniProtKB"/>
</dbReference>
<dbReference type="GO" id="GO:0043123">
    <property type="term" value="P:positive regulation of canonical NF-kappaB signal transduction"/>
    <property type="evidence" value="ECO:0000250"/>
    <property type="project" value="UniProtKB"/>
</dbReference>
<dbReference type="GO" id="GO:0051092">
    <property type="term" value="P:positive regulation of NF-kappaB transcription factor activity"/>
    <property type="evidence" value="ECO:0000250"/>
    <property type="project" value="UniProtKB"/>
</dbReference>
<dbReference type="GO" id="GO:1901224">
    <property type="term" value="P:positive regulation of non-canonical NF-kappaB signal transduction"/>
    <property type="evidence" value="ECO:0000315"/>
    <property type="project" value="CAFA"/>
</dbReference>
<dbReference type="GO" id="GO:0032206">
    <property type="term" value="P:positive regulation of telomere maintenance"/>
    <property type="evidence" value="ECO:0000303"/>
    <property type="project" value="ComplexPortal"/>
</dbReference>
<dbReference type="GO" id="GO:0031848">
    <property type="term" value="P:protection from non-homologous end joining at telomere"/>
    <property type="evidence" value="ECO:0000315"/>
    <property type="project" value="BHF-UCL"/>
</dbReference>
<dbReference type="GO" id="GO:0070198">
    <property type="term" value="P:protein localization to chromosome, telomeric region"/>
    <property type="evidence" value="ECO:0000315"/>
    <property type="project" value="BHF-UCL"/>
</dbReference>
<dbReference type="GO" id="GO:0006355">
    <property type="term" value="P:regulation of DNA-templated transcription"/>
    <property type="evidence" value="ECO:0000315"/>
    <property type="project" value="CAFA"/>
</dbReference>
<dbReference type="GO" id="GO:0010569">
    <property type="term" value="P:regulation of double-strand break repair via homologous recombination"/>
    <property type="evidence" value="ECO:0000250"/>
    <property type="project" value="UniProtKB"/>
</dbReference>
<dbReference type="GO" id="GO:0032204">
    <property type="term" value="P:regulation of telomere maintenance"/>
    <property type="evidence" value="ECO:0000315"/>
    <property type="project" value="BHF-UCL"/>
</dbReference>
<dbReference type="GO" id="GO:0016233">
    <property type="term" value="P:telomere capping"/>
    <property type="evidence" value="ECO:0000314"/>
    <property type="project" value="ComplexPortal"/>
</dbReference>
<dbReference type="GO" id="GO:0000723">
    <property type="term" value="P:telomere maintenance"/>
    <property type="evidence" value="ECO:0000314"/>
    <property type="project" value="BHF-UCL"/>
</dbReference>
<dbReference type="GO" id="GO:0007004">
    <property type="term" value="P:telomere maintenance via telomerase"/>
    <property type="evidence" value="ECO:0000304"/>
    <property type="project" value="ProtInc"/>
</dbReference>
<dbReference type="GO" id="GO:0010833">
    <property type="term" value="P:telomere maintenance via telomere lengthening"/>
    <property type="evidence" value="ECO:0000250"/>
    <property type="project" value="UniProtKB"/>
</dbReference>
<dbReference type="CDD" id="cd11655">
    <property type="entry name" value="rap1_myb-like"/>
    <property type="match status" value="1"/>
</dbReference>
<dbReference type="CDD" id="cd11653">
    <property type="entry name" value="rap1_RCT"/>
    <property type="match status" value="1"/>
</dbReference>
<dbReference type="FunFam" id="1.10.10.2170:FF:000001">
    <property type="entry name" value="Telomeric repeat-binding factor 2-interacting protein 1"/>
    <property type="match status" value="1"/>
</dbReference>
<dbReference type="FunFam" id="1.10.10.60:FF:000246">
    <property type="entry name" value="Telomeric repeat-binding factor 2-interacting protein 1"/>
    <property type="match status" value="1"/>
</dbReference>
<dbReference type="Gene3D" id="1.10.10.2170">
    <property type="match status" value="1"/>
</dbReference>
<dbReference type="Gene3D" id="3.40.50.10190">
    <property type="entry name" value="BRCT domain"/>
    <property type="match status" value="1"/>
</dbReference>
<dbReference type="Gene3D" id="1.10.10.60">
    <property type="entry name" value="Homeodomain-like"/>
    <property type="match status" value="1"/>
</dbReference>
<dbReference type="InterPro" id="IPR001357">
    <property type="entry name" value="BRCT_dom"/>
</dbReference>
<dbReference type="InterPro" id="IPR036420">
    <property type="entry name" value="BRCT_dom_sf"/>
</dbReference>
<dbReference type="InterPro" id="IPR009057">
    <property type="entry name" value="Homeodomain-like_sf"/>
</dbReference>
<dbReference type="InterPro" id="IPR021661">
    <property type="entry name" value="Rap1_C"/>
</dbReference>
<dbReference type="InterPro" id="IPR038104">
    <property type="entry name" value="Rap1_C_sf"/>
</dbReference>
<dbReference type="InterPro" id="IPR039595">
    <property type="entry name" value="TE2IP/Rap1"/>
</dbReference>
<dbReference type="InterPro" id="IPR015010">
    <property type="entry name" value="TERF2IP_Myb"/>
</dbReference>
<dbReference type="PANTHER" id="PTHR16466">
    <property type="entry name" value="TELOMERE REPEAT-BINDING FACTOR 2-INTERACTING PROTEIN 1"/>
    <property type="match status" value="1"/>
</dbReference>
<dbReference type="PANTHER" id="PTHR16466:SF6">
    <property type="entry name" value="TELOMERIC REPEAT-BINDING FACTOR 2-INTERACTING PROTEIN 1"/>
    <property type="match status" value="1"/>
</dbReference>
<dbReference type="Pfam" id="PF16589">
    <property type="entry name" value="BRCT_2"/>
    <property type="match status" value="1"/>
</dbReference>
<dbReference type="Pfam" id="PF08914">
    <property type="entry name" value="Myb_Rap1"/>
    <property type="match status" value="1"/>
</dbReference>
<dbReference type="Pfam" id="PF11626">
    <property type="entry name" value="Rap1_C"/>
    <property type="match status" value="1"/>
</dbReference>
<dbReference type="SUPFAM" id="SSF46689">
    <property type="entry name" value="Homeodomain-like"/>
    <property type="match status" value="1"/>
</dbReference>
<sequence>MAEAMDLGKDPNGPTHSSTLFVRDDGSSMSFYVRPSPAKRRLSTLILHGGGTVCRVQEPGAVLLAQPGEALAEASGDFISTQYILDCVERNERLELEAYRLGPASAADTGSEAKPGALAEGAAEPEPQRHAGRIAFTDADDVAILTYVKENARSPSSVTGNALWKAMEKSSLTQHSWQSLKDRYLKHLRGQEHKYLLGDAPVSPSSQKLKRKAEEDPEAADSGEPQNKRTPDLPEEEYVKEEIQENEEAVKKMLVEATREFEEVVVDESPPDFEIHITMCDDDPPTPEEDSETQPDEEEEEEEEKVSQPEVGAAIKIIRQLMEKFNLDLSTVTQAFLKNSGELEATSAFLASGQRADGYPIWSRQDDIDLQKDDEDTREALVKKFGAQNVARRIEFRKK</sequence>
<proteinExistence type="evidence at protein level"/>
<accession>Q9NYB0</accession>
<accession>B4DQN4</accession>
<accession>Q4W4Y2</accession>
<accession>Q8WYZ3</accession>
<accession>Q9NWR2</accession>